<evidence type="ECO:0000255" key="1">
    <source>
        <dbReference type="HAMAP-Rule" id="MF_00228"/>
    </source>
</evidence>
<gene>
    <name evidence="1" type="primary">thiM</name>
    <name type="ordered locus">ACICU_02291</name>
</gene>
<reference key="1">
    <citation type="journal article" date="2008" name="Antimicrob. Agents Chemother.">
        <title>Whole-genome pyrosequencing of an epidemic multidrug-resistant Acinetobacter baumannii strain belonging to the European clone II group.</title>
        <authorList>
            <person name="Iacono M."/>
            <person name="Villa L."/>
            <person name="Fortini D."/>
            <person name="Bordoni R."/>
            <person name="Imperi F."/>
            <person name="Bonnal R.J."/>
            <person name="Sicheritz-Ponten T."/>
            <person name="De Bellis G."/>
            <person name="Visca P."/>
            <person name="Cassone A."/>
            <person name="Carattoli A."/>
        </authorList>
    </citation>
    <scope>NUCLEOTIDE SEQUENCE [LARGE SCALE GENOMIC DNA]</scope>
    <source>
        <strain>ACICU</strain>
    </source>
</reference>
<feature type="chain" id="PRO_0000383812" description="Hydroxyethylthiazole kinase">
    <location>
        <begin position="1"/>
        <end position="275"/>
    </location>
</feature>
<feature type="binding site" evidence="1">
    <location>
        <position position="50"/>
    </location>
    <ligand>
        <name>substrate</name>
    </ligand>
</feature>
<feature type="binding site" evidence="1">
    <location>
        <position position="126"/>
    </location>
    <ligand>
        <name>ATP</name>
        <dbReference type="ChEBI" id="CHEBI:30616"/>
    </ligand>
</feature>
<feature type="binding site" evidence="1">
    <location>
        <position position="171"/>
    </location>
    <ligand>
        <name>ATP</name>
        <dbReference type="ChEBI" id="CHEBI:30616"/>
    </ligand>
</feature>
<feature type="binding site" evidence="1">
    <location>
        <position position="200"/>
    </location>
    <ligand>
        <name>substrate</name>
    </ligand>
</feature>
<accession>B2HTR5</accession>
<name>THIM_ACIBC</name>
<comment type="function">
    <text evidence="1">Catalyzes the phosphorylation of the hydroxyl group of 4-methyl-5-beta-hydroxyethylthiazole (THZ).</text>
</comment>
<comment type="catalytic activity">
    <reaction evidence="1">
        <text>5-(2-hydroxyethyl)-4-methylthiazole + ATP = 4-methyl-5-(2-phosphooxyethyl)-thiazole + ADP + H(+)</text>
        <dbReference type="Rhea" id="RHEA:24212"/>
        <dbReference type="ChEBI" id="CHEBI:15378"/>
        <dbReference type="ChEBI" id="CHEBI:17957"/>
        <dbReference type="ChEBI" id="CHEBI:30616"/>
        <dbReference type="ChEBI" id="CHEBI:58296"/>
        <dbReference type="ChEBI" id="CHEBI:456216"/>
        <dbReference type="EC" id="2.7.1.50"/>
    </reaction>
</comment>
<comment type="cofactor">
    <cofactor evidence="1">
        <name>Mg(2+)</name>
        <dbReference type="ChEBI" id="CHEBI:18420"/>
    </cofactor>
</comment>
<comment type="pathway">
    <text evidence="1">Cofactor biosynthesis; thiamine diphosphate biosynthesis; 4-methyl-5-(2-phosphoethyl)-thiazole from 5-(2-hydroxyethyl)-4-methylthiazole: step 1/1.</text>
</comment>
<comment type="similarity">
    <text evidence="1">Belongs to the Thz kinase family.</text>
</comment>
<organism>
    <name type="scientific">Acinetobacter baumannii (strain ACICU)</name>
    <dbReference type="NCBI Taxonomy" id="405416"/>
    <lineage>
        <taxon>Bacteria</taxon>
        <taxon>Pseudomonadati</taxon>
        <taxon>Pseudomonadota</taxon>
        <taxon>Gammaproteobacteria</taxon>
        <taxon>Moraxellales</taxon>
        <taxon>Moraxellaceae</taxon>
        <taxon>Acinetobacter</taxon>
        <taxon>Acinetobacter calcoaceticus/baumannii complex</taxon>
    </lineage>
</organism>
<dbReference type="EC" id="2.7.1.50" evidence="1"/>
<dbReference type="EMBL" id="CP000863">
    <property type="protein sequence ID" value="ACC57603.1"/>
    <property type="molecule type" value="Genomic_DNA"/>
</dbReference>
<dbReference type="RefSeq" id="WP_000204864.1">
    <property type="nucleotide sequence ID" value="NZ_CP031380.1"/>
</dbReference>
<dbReference type="SMR" id="B2HTR5"/>
<dbReference type="KEGG" id="abc:ACICU_02291"/>
<dbReference type="HOGENOM" id="CLU_019943_0_1_6"/>
<dbReference type="UniPathway" id="UPA00060">
    <property type="reaction ID" value="UER00139"/>
</dbReference>
<dbReference type="Proteomes" id="UP000008839">
    <property type="component" value="Chromosome"/>
</dbReference>
<dbReference type="GO" id="GO:0005524">
    <property type="term" value="F:ATP binding"/>
    <property type="evidence" value="ECO:0007669"/>
    <property type="project" value="UniProtKB-UniRule"/>
</dbReference>
<dbReference type="GO" id="GO:0004417">
    <property type="term" value="F:hydroxyethylthiazole kinase activity"/>
    <property type="evidence" value="ECO:0007669"/>
    <property type="project" value="UniProtKB-UniRule"/>
</dbReference>
<dbReference type="GO" id="GO:0000287">
    <property type="term" value="F:magnesium ion binding"/>
    <property type="evidence" value="ECO:0007669"/>
    <property type="project" value="UniProtKB-UniRule"/>
</dbReference>
<dbReference type="GO" id="GO:0009228">
    <property type="term" value="P:thiamine biosynthetic process"/>
    <property type="evidence" value="ECO:0007669"/>
    <property type="project" value="UniProtKB-KW"/>
</dbReference>
<dbReference type="GO" id="GO:0009229">
    <property type="term" value="P:thiamine diphosphate biosynthetic process"/>
    <property type="evidence" value="ECO:0007669"/>
    <property type="project" value="UniProtKB-UniRule"/>
</dbReference>
<dbReference type="CDD" id="cd01170">
    <property type="entry name" value="THZ_kinase"/>
    <property type="match status" value="1"/>
</dbReference>
<dbReference type="Gene3D" id="3.40.1190.20">
    <property type="match status" value="1"/>
</dbReference>
<dbReference type="HAMAP" id="MF_00228">
    <property type="entry name" value="Thz_kinase"/>
    <property type="match status" value="1"/>
</dbReference>
<dbReference type="InterPro" id="IPR000417">
    <property type="entry name" value="Hyethyz_kinase"/>
</dbReference>
<dbReference type="InterPro" id="IPR029056">
    <property type="entry name" value="Ribokinase-like"/>
</dbReference>
<dbReference type="NCBIfam" id="NF006830">
    <property type="entry name" value="PRK09355.1"/>
    <property type="match status" value="1"/>
</dbReference>
<dbReference type="Pfam" id="PF02110">
    <property type="entry name" value="HK"/>
    <property type="match status" value="1"/>
</dbReference>
<dbReference type="PIRSF" id="PIRSF000513">
    <property type="entry name" value="Thz_kinase"/>
    <property type="match status" value="1"/>
</dbReference>
<dbReference type="PRINTS" id="PR01099">
    <property type="entry name" value="HYETHTZKNASE"/>
</dbReference>
<dbReference type="SUPFAM" id="SSF53613">
    <property type="entry name" value="Ribokinase-like"/>
    <property type="match status" value="1"/>
</dbReference>
<protein>
    <recommendedName>
        <fullName evidence="1">Hydroxyethylthiazole kinase</fullName>
        <ecNumber evidence="1">2.7.1.50</ecNumber>
    </recommendedName>
    <alternativeName>
        <fullName evidence="1">4-methyl-5-beta-hydroxyethylthiazole kinase</fullName>
        <shortName evidence="1">TH kinase</shortName>
        <shortName evidence="1">Thz kinase</shortName>
    </alternativeName>
</protein>
<sequence length="275" mass="29160">MTSTSNLIEQVIEAWQNMQAKTPLVQCITNSVAANYTANVLLASGASPAMIDNPYEAESFTKISSALSINLGTPTSEQMQAMQISAKTAQLNNIPWVLDPVGYGPILAWRSQMTDELLQFKPSVIRGNASEISTLAGNQVQSKGVDSTLSSDQAYQQAYALLAHADCIAISGESDYILSNEIDAVIQVNGGSPLQPKITATGCALGALIAAYSAVATPTIAALSAHVHFAIAGKLAANQAQTMGSFSSIFMDYIHMLDDNLIEQYADIKLLNIQA</sequence>
<keyword id="KW-0067">ATP-binding</keyword>
<keyword id="KW-0418">Kinase</keyword>
<keyword id="KW-0460">Magnesium</keyword>
<keyword id="KW-0479">Metal-binding</keyword>
<keyword id="KW-0547">Nucleotide-binding</keyword>
<keyword id="KW-0784">Thiamine biosynthesis</keyword>
<keyword id="KW-0808">Transferase</keyword>
<proteinExistence type="inferred from homology"/>